<feature type="chain" id="PRO_1000072716" description="Phosphatidylserine decarboxylase beta chain" evidence="1">
    <location>
        <begin position="1"/>
        <end position="187"/>
    </location>
</feature>
<feature type="chain" id="PRO_1000072717" description="Phosphatidylserine decarboxylase alpha chain" evidence="1">
    <location>
        <begin position="188"/>
        <end position="225"/>
    </location>
</feature>
<feature type="active site" description="Schiff-base intermediate with substrate; via pyruvic acid" evidence="1">
    <location>
        <position position="188"/>
    </location>
</feature>
<feature type="site" description="Cleavage (non-hydrolytic); by autocatalysis" evidence="1">
    <location>
        <begin position="187"/>
        <end position="188"/>
    </location>
</feature>
<feature type="modified residue" description="Pyruvic acid (Ser); by autocatalysis" evidence="1">
    <location>
        <position position="188"/>
    </location>
</feature>
<sequence>MDSLTSILTPIHREGHRFAIIFAAVTIVLFLIWNPLGWIGVILTLWCLYFFRDPDRVTPTREGLVVSPADGIVNLITEASPPEELGLGDMVRTRVSIFMNVFNCHVNRAPVAGTVKRVAYRPGLFLNADLDKASDANERNSLLIERADGEQIVVVQIAGLVARRIVCDVREGHDLAAGERFGIIRFGSRLDVYLPVGAIPLVAVGQTAIAGETVLADSISVLPQV</sequence>
<name>PSD_PARL1</name>
<keyword id="KW-1003">Cell membrane</keyword>
<keyword id="KW-0210">Decarboxylase</keyword>
<keyword id="KW-0444">Lipid biosynthesis</keyword>
<keyword id="KW-0443">Lipid metabolism</keyword>
<keyword id="KW-0456">Lyase</keyword>
<keyword id="KW-0472">Membrane</keyword>
<keyword id="KW-0594">Phospholipid biosynthesis</keyword>
<keyword id="KW-1208">Phospholipid metabolism</keyword>
<keyword id="KW-0670">Pyruvate</keyword>
<keyword id="KW-1185">Reference proteome</keyword>
<keyword id="KW-0865">Zymogen</keyword>
<accession>A7HS52</accession>
<evidence type="ECO:0000255" key="1">
    <source>
        <dbReference type="HAMAP-Rule" id="MF_00664"/>
    </source>
</evidence>
<organism>
    <name type="scientific">Parvibaculum lavamentivorans (strain DS-1 / DSM 13023 / NCIMB 13966)</name>
    <dbReference type="NCBI Taxonomy" id="402881"/>
    <lineage>
        <taxon>Bacteria</taxon>
        <taxon>Pseudomonadati</taxon>
        <taxon>Pseudomonadota</taxon>
        <taxon>Alphaproteobacteria</taxon>
        <taxon>Hyphomicrobiales</taxon>
        <taxon>Parvibaculaceae</taxon>
        <taxon>Parvibaculum</taxon>
    </lineage>
</organism>
<reference key="1">
    <citation type="journal article" date="2011" name="Stand. Genomic Sci.">
        <title>Complete genome sequence of Parvibaculum lavamentivorans type strain (DS-1(T)).</title>
        <authorList>
            <person name="Schleheck D."/>
            <person name="Weiss M."/>
            <person name="Pitluck S."/>
            <person name="Bruce D."/>
            <person name="Land M.L."/>
            <person name="Han S."/>
            <person name="Saunders E."/>
            <person name="Tapia R."/>
            <person name="Detter C."/>
            <person name="Brettin T."/>
            <person name="Han J."/>
            <person name="Woyke T."/>
            <person name="Goodwin L."/>
            <person name="Pennacchio L."/>
            <person name="Nolan M."/>
            <person name="Cook A.M."/>
            <person name="Kjelleberg S."/>
            <person name="Thomas T."/>
        </authorList>
    </citation>
    <scope>NUCLEOTIDE SEQUENCE [LARGE SCALE GENOMIC DNA]</scope>
    <source>
        <strain>DS-1 / DSM 13023 / NCIMB 13966</strain>
    </source>
</reference>
<proteinExistence type="inferred from homology"/>
<gene>
    <name evidence="1" type="primary">psd</name>
    <name type="ordered locus">Plav_1114</name>
</gene>
<dbReference type="EC" id="4.1.1.65" evidence="1"/>
<dbReference type="EMBL" id="CP000774">
    <property type="protein sequence ID" value="ABS62735.1"/>
    <property type="molecule type" value="Genomic_DNA"/>
</dbReference>
<dbReference type="STRING" id="402881.Plav_1114"/>
<dbReference type="KEGG" id="pla:Plav_1114"/>
<dbReference type="eggNOG" id="COG0688">
    <property type="taxonomic scope" value="Bacteria"/>
</dbReference>
<dbReference type="HOGENOM" id="CLU_072492_0_0_5"/>
<dbReference type="OrthoDB" id="9790893at2"/>
<dbReference type="UniPathway" id="UPA00558">
    <property type="reaction ID" value="UER00616"/>
</dbReference>
<dbReference type="Proteomes" id="UP000006377">
    <property type="component" value="Chromosome"/>
</dbReference>
<dbReference type="GO" id="GO:0005886">
    <property type="term" value="C:plasma membrane"/>
    <property type="evidence" value="ECO:0007669"/>
    <property type="project" value="UniProtKB-SubCell"/>
</dbReference>
<dbReference type="GO" id="GO:0004609">
    <property type="term" value="F:phosphatidylserine decarboxylase activity"/>
    <property type="evidence" value="ECO:0007669"/>
    <property type="project" value="UniProtKB-UniRule"/>
</dbReference>
<dbReference type="GO" id="GO:0006646">
    <property type="term" value="P:phosphatidylethanolamine biosynthetic process"/>
    <property type="evidence" value="ECO:0007669"/>
    <property type="project" value="UniProtKB-UniRule"/>
</dbReference>
<dbReference type="HAMAP" id="MF_00664">
    <property type="entry name" value="PS_decarb_PSD_A"/>
    <property type="match status" value="1"/>
</dbReference>
<dbReference type="InterPro" id="IPR003817">
    <property type="entry name" value="PS_Dcarbxylase"/>
</dbReference>
<dbReference type="InterPro" id="IPR033175">
    <property type="entry name" value="PSD-A"/>
</dbReference>
<dbReference type="NCBIfam" id="NF003677">
    <property type="entry name" value="PRK05305.1-1"/>
    <property type="match status" value="1"/>
</dbReference>
<dbReference type="NCBIfam" id="NF003678">
    <property type="entry name" value="PRK05305.1-2"/>
    <property type="match status" value="1"/>
</dbReference>
<dbReference type="NCBIfam" id="NF003679">
    <property type="entry name" value="PRK05305.1-3"/>
    <property type="match status" value="1"/>
</dbReference>
<dbReference type="NCBIfam" id="NF003685">
    <property type="entry name" value="PRK05305.2-5"/>
    <property type="match status" value="1"/>
</dbReference>
<dbReference type="PANTHER" id="PTHR35809">
    <property type="entry name" value="ARCHAETIDYLSERINE DECARBOXYLASE PROENZYME-RELATED"/>
    <property type="match status" value="1"/>
</dbReference>
<dbReference type="PANTHER" id="PTHR35809:SF1">
    <property type="entry name" value="ARCHAETIDYLSERINE DECARBOXYLASE PROENZYME-RELATED"/>
    <property type="match status" value="1"/>
</dbReference>
<dbReference type="Pfam" id="PF02666">
    <property type="entry name" value="PS_Dcarbxylase"/>
    <property type="match status" value="1"/>
</dbReference>
<comment type="function">
    <text evidence="1">Catalyzes the formation of phosphatidylethanolamine (PtdEtn) from phosphatidylserine (PtdSer).</text>
</comment>
<comment type="catalytic activity">
    <reaction evidence="1">
        <text>a 1,2-diacyl-sn-glycero-3-phospho-L-serine + H(+) = a 1,2-diacyl-sn-glycero-3-phosphoethanolamine + CO2</text>
        <dbReference type="Rhea" id="RHEA:20828"/>
        <dbReference type="ChEBI" id="CHEBI:15378"/>
        <dbReference type="ChEBI" id="CHEBI:16526"/>
        <dbReference type="ChEBI" id="CHEBI:57262"/>
        <dbReference type="ChEBI" id="CHEBI:64612"/>
        <dbReference type="EC" id="4.1.1.65"/>
    </reaction>
</comment>
<comment type="cofactor">
    <cofactor evidence="1">
        <name>pyruvate</name>
        <dbReference type="ChEBI" id="CHEBI:15361"/>
    </cofactor>
    <text evidence="1">Binds 1 pyruvoyl group covalently per subunit.</text>
</comment>
<comment type="pathway">
    <text evidence="1">Phospholipid metabolism; phosphatidylethanolamine biosynthesis; phosphatidylethanolamine from CDP-diacylglycerol: step 2/2.</text>
</comment>
<comment type="subunit">
    <text evidence="1">Heterodimer of a large membrane-associated beta subunit and a small pyruvoyl-containing alpha subunit.</text>
</comment>
<comment type="subcellular location">
    <subcellularLocation>
        <location evidence="1">Cell membrane</location>
        <topology evidence="1">Peripheral membrane protein</topology>
    </subcellularLocation>
</comment>
<comment type="PTM">
    <text evidence="1">Is synthesized initially as an inactive proenzyme. Formation of the active enzyme involves a self-maturation process in which the active site pyruvoyl group is generated from an internal serine residue via an autocatalytic post-translational modification. Two non-identical subunits are generated from the proenzyme in this reaction, and the pyruvate is formed at the N-terminus of the alpha chain, which is derived from the carboxyl end of the proenzyme. The post-translation cleavage follows an unusual pathway, termed non-hydrolytic serinolysis, in which the side chain hydroxyl group of the serine supplies its oxygen atom to form the C-terminus of the beta chain, while the remainder of the serine residue undergoes an oxidative deamination to produce ammonia and the pyruvoyl prosthetic group on the alpha chain.</text>
</comment>
<comment type="similarity">
    <text evidence="1">Belongs to the phosphatidylserine decarboxylase family. PSD-A subfamily.</text>
</comment>
<protein>
    <recommendedName>
        <fullName evidence="1">Phosphatidylserine decarboxylase proenzyme</fullName>
        <ecNumber evidence="1">4.1.1.65</ecNumber>
    </recommendedName>
    <component>
        <recommendedName>
            <fullName evidence="1">Phosphatidylserine decarboxylase alpha chain</fullName>
        </recommendedName>
    </component>
    <component>
        <recommendedName>
            <fullName evidence="1">Phosphatidylserine decarboxylase beta chain</fullName>
        </recommendedName>
    </component>
</protein>